<sequence length="610" mass="66636">MCGIVGAVAQRDVAEILVEGLRRLEYRGYDSAGVAVVDSQSNLTRIRRLGKVQELADAVDQAEVVGGTGIAHTRWATHGEPSEINAHPHQSGDISVVHNGIIENHETLRELLQSRGYVFESQTDTEVIAHLVEWELRTAASLLEAVQKTVKQLEGAYGTVVLDRNDPSRIVVARSGSPIVIGFGVGENFLASDQLALLNVTRRFMYLEEGDVAEITRREVAVYDASGERVEREIAESNAEHDAGDKGQYRHFMQKEIYEQPTALINTMEGRITADSVVTEAIGVNAAEILSKVEHVQIVACGTSYNAGMTARYWFEDIAGVSCDVEIASEFRYRKFVTRPNSLLITLSQSGETADTLAALRLAKEKGYMAAMTICNVAGSSLVRESDFAFMTRAGVEIGVASTKAFTTQLAALLMLVTALGKQQGRISKEKEKEIVEALHALPKQINAALSFEKDIEALATDFADKHHTLFLGRGEFYPIAMEASLKLKEISYIHAEAYAAGELKHGPLALIDADMPVVVVAPSNDLLEKLKSNVEEVRARGGLLYVFADADAGFEGDETMKIITMPHVSEITAAIYYTIPMQLLSYYVALIKGTDVDQPRNLAKAVTVE</sequence>
<accession>Q8DEF3</accession>
<feature type="initiator methionine" description="Removed" evidence="1">
    <location>
        <position position="1"/>
    </location>
</feature>
<feature type="chain" id="PRO_0000135411" description="Glutamine--fructose-6-phosphate aminotransferase [isomerizing]">
    <location>
        <begin position="2"/>
        <end position="610"/>
    </location>
</feature>
<feature type="domain" description="Glutamine amidotransferase type-2" evidence="1">
    <location>
        <begin position="2"/>
        <end position="218"/>
    </location>
</feature>
<feature type="domain" description="SIS 1" evidence="1">
    <location>
        <begin position="286"/>
        <end position="426"/>
    </location>
</feature>
<feature type="domain" description="SIS 2" evidence="1">
    <location>
        <begin position="459"/>
        <end position="600"/>
    </location>
</feature>
<feature type="active site" description="Nucleophile; for GATase activity" evidence="1">
    <location>
        <position position="2"/>
    </location>
</feature>
<feature type="active site" description="For Fru-6P isomerization activity" evidence="1">
    <location>
        <position position="605"/>
    </location>
</feature>
<protein>
    <recommendedName>
        <fullName evidence="1">Glutamine--fructose-6-phosphate aminotransferase [isomerizing]</fullName>
        <ecNumber evidence="1">2.6.1.16</ecNumber>
    </recommendedName>
    <alternativeName>
        <fullName evidence="1">D-fructose-6-phosphate amidotransferase</fullName>
    </alternativeName>
    <alternativeName>
        <fullName evidence="1">GFAT</fullName>
    </alternativeName>
    <alternativeName>
        <fullName evidence="1">Glucosamine-6-phosphate synthase</fullName>
    </alternativeName>
    <alternativeName>
        <fullName evidence="1">Hexosephosphate aminotransferase</fullName>
    </alternativeName>
    <alternativeName>
        <fullName evidence="1">L-glutamine--D-fructose-6-phosphate amidotransferase</fullName>
    </alternativeName>
</protein>
<gene>
    <name evidence="1" type="primary">glmS</name>
    <name type="ordered locus">VV1_0641</name>
</gene>
<keyword id="KW-0032">Aminotransferase</keyword>
<keyword id="KW-0963">Cytoplasm</keyword>
<keyword id="KW-0315">Glutamine amidotransferase</keyword>
<keyword id="KW-0677">Repeat</keyword>
<keyword id="KW-0808">Transferase</keyword>
<proteinExistence type="inferred from homology"/>
<reference key="1">
    <citation type="submission" date="2002-12" db="EMBL/GenBank/DDBJ databases">
        <title>Complete genome sequence of Vibrio vulnificus CMCP6.</title>
        <authorList>
            <person name="Rhee J.H."/>
            <person name="Kim S.Y."/>
            <person name="Chung S.S."/>
            <person name="Kim J.J."/>
            <person name="Moon Y.H."/>
            <person name="Jeong H."/>
            <person name="Choy H.E."/>
        </authorList>
    </citation>
    <scope>NUCLEOTIDE SEQUENCE [LARGE SCALE GENOMIC DNA]</scope>
    <source>
        <strain>CMCP6</strain>
    </source>
</reference>
<organism>
    <name type="scientific">Vibrio vulnificus (strain CMCP6)</name>
    <dbReference type="NCBI Taxonomy" id="216895"/>
    <lineage>
        <taxon>Bacteria</taxon>
        <taxon>Pseudomonadati</taxon>
        <taxon>Pseudomonadota</taxon>
        <taxon>Gammaproteobacteria</taxon>
        <taxon>Vibrionales</taxon>
        <taxon>Vibrionaceae</taxon>
        <taxon>Vibrio</taxon>
    </lineage>
</organism>
<dbReference type="EC" id="2.6.1.16" evidence="1"/>
<dbReference type="EMBL" id="AE016795">
    <property type="protein sequence ID" value="AAO09154.1"/>
    <property type="molecule type" value="Genomic_DNA"/>
</dbReference>
<dbReference type="RefSeq" id="WP_011078721.1">
    <property type="nucleotide sequence ID" value="NC_004459.3"/>
</dbReference>
<dbReference type="SMR" id="Q8DEF3"/>
<dbReference type="KEGG" id="vvu:VV1_0641"/>
<dbReference type="HOGENOM" id="CLU_012520_5_2_6"/>
<dbReference type="Proteomes" id="UP000002275">
    <property type="component" value="Chromosome 1"/>
</dbReference>
<dbReference type="GO" id="GO:0005829">
    <property type="term" value="C:cytosol"/>
    <property type="evidence" value="ECO:0007669"/>
    <property type="project" value="TreeGrafter"/>
</dbReference>
<dbReference type="GO" id="GO:0097367">
    <property type="term" value="F:carbohydrate derivative binding"/>
    <property type="evidence" value="ECO:0007669"/>
    <property type="project" value="InterPro"/>
</dbReference>
<dbReference type="GO" id="GO:0004360">
    <property type="term" value="F:glutamine-fructose-6-phosphate transaminase (isomerizing) activity"/>
    <property type="evidence" value="ECO:0007669"/>
    <property type="project" value="UniProtKB-UniRule"/>
</dbReference>
<dbReference type="GO" id="GO:0005975">
    <property type="term" value="P:carbohydrate metabolic process"/>
    <property type="evidence" value="ECO:0007669"/>
    <property type="project" value="UniProtKB-UniRule"/>
</dbReference>
<dbReference type="GO" id="GO:0006002">
    <property type="term" value="P:fructose 6-phosphate metabolic process"/>
    <property type="evidence" value="ECO:0007669"/>
    <property type="project" value="TreeGrafter"/>
</dbReference>
<dbReference type="GO" id="GO:0006487">
    <property type="term" value="P:protein N-linked glycosylation"/>
    <property type="evidence" value="ECO:0007669"/>
    <property type="project" value="TreeGrafter"/>
</dbReference>
<dbReference type="GO" id="GO:0006047">
    <property type="term" value="P:UDP-N-acetylglucosamine metabolic process"/>
    <property type="evidence" value="ECO:0007669"/>
    <property type="project" value="TreeGrafter"/>
</dbReference>
<dbReference type="CDD" id="cd00714">
    <property type="entry name" value="GFAT"/>
    <property type="match status" value="1"/>
</dbReference>
<dbReference type="CDD" id="cd05008">
    <property type="entry name" value="SIS_GlmS_GlmD_1"/>
    <property type="match status" value="1"/>
</dbReference>
<dbReference type="CDD" id="cd05009">
    <property type="entry name" value="SIS_GlmS_GlmD_2"/>
    <property type="match status" value="1"/>
</dbReference>
<dbReference type="FunFam" id="3.40.50.10490:FF:000001">
    <property type="entry name" value="Glutamine--fructose-6-phosphate aminotransferase [isomerizing]"/>
    <property type="match status" value="1"/>
</dbReference>
<dbReference type="FunFam" id="3.40.50.10490:FF:000002">
    <property type="entry name" value="Glutamine--fructose-6-phosphate aminotransferase [isomerizing]"/>
    <property type="match status" value="1"/>
</dbReference>
<dbReference type="FunFam" id="3.60.20.10:FF:000006">
    <property type="entry name" value="Glutamine--fructose-6-phosphate aminotransferase [isomerizing]"/>
    <property type="match status" value="1"/>
</dbReference>
<dbReference type="Gene3D" id="3.40.50.10490">
    <property type="entry name" value="Glucose-6-phosphate isomerase like protein, domain 1"/>
    <property type="match status" value="2"/>
</dbReference>
<dbReference type="Gene3D" id="3.60.20.10">
    <property type="entry name" value="Glutamine Phosphoribosylpyrophosphate, subunit 1, domain 1"/>
    <property type="match status" value="1"/>
</dbReference>
<dbReference type="HAMAP" id="MF_00164">
    <property type="entry name" value="GlmS"/>
    <property type="match status" value="1"/>
</dbReference>
<dbReference type="InterPro" id="IPR017932">
    <property type="entry name" value="GATase_2_dom"/>
</dbReference>
<dbReference type="InterPro" id="IPR005855">
    <property type="entry name" value="GFAT"/>
</dbReference>
<dbReference type="InterPro" id="IPR047084">
    <property type="entry name" value="GFAT_N"/>
</dbReference>
<dbReference type="InterPro" id="IPR035466">
    <property type="entry name" value="GlmS/AgaS_SIS"/>
</dbReference>
<dbReference type="InterPro" id="IPR035490">
    <property type="entry name" value="GlmS/FrlB_SIS"/>
</dbReference>
<dbReference type="InterPro" id="IPR029055">
    <property type="entry name" value="Ntn_hydrolases_N"/>
</dbReference>
<dbReference type="InterPro" id="IPR001347">
    <property type="entry name" value="SIS_dom"/>
</dbReference>
<dbReference type="InterPro" id="IPR046348">
    <property type="entry name" value="SIS_dom_sf"/>
</dbReference>
<dbReference type="NCBIfam" id="TIGR01135">
    <property type="entry name" value="glmS"/>
    <property type="match status" value="1"/>
</dbReference>
<dbReference type="NCBIfam" id="NF001484">
    <property type="entry name" value="PRK00331.1"/>
    <property type="match status" value="1"/>
</dbReference>
<dbReference type="PANTHER" id="PTHR10937">
    <property type="entry name" value="GLUCOSAMINE--FRUCTOSE-6-PHOSPHATE AMINOTRANSFERASE, ISOMERIZING"/>
    <property type="match status" value="1"/>
</dbReference>
<dbReference type="PANTHER" id="PTHR10937:SF0">
    <property type="entry name" value="GLUTAMINE--FRUCTOSE-6-PHOSPHATE TRANSAMINASE (ISOMERIZING)"/>
    <property type="match status" value="1"/>
</dbReference>
<dbReference type="Pfam" id="PF13522">
    <property type="entry name" value="GATase_6"/>
    <property type="match status" value="1"/>
</dbReference>
<dbReference type="Pfam" id="PF01380">
    <property type="entry name" value="SIS"/>
    <property type="match status" value="2"/>
</dbReference>
<dbReference type="SUPFAM" id="SSF56235">
    <property type="entry name" value="N-terminal nucleophile aminohydrolases (Ntn hydrolases)"/>
    <property type="match status" value="1"/>
</dbReference>
<dbReference type="SUPFAM" id="SSF53697">
    <property type="entry name" value="SIS domain"/>
    <property type="match status" value="1"/>
</dbReference>
<dbReference type="PROSITE" id="PS51278">
    <property type="entry name" value="GATASE_TYPE_2"/>
    <property type="match status" value="1"/>
</dbReference>
<dbReference type="PROSITE" id="PS51464">
    <property type="entry name" value="SIS"/>
    <property type="match status" value="2"/>
</dbReference>
<name>GLMS_VIBVU</name>
<comment type="function">
    <text evidence="1">Catalyzes the first step in hexosamine metabolism, converting fructose-6P into glucosamine-6P using glutamine as a nitrogen source.</text>
</comment>
<comment type="catalytic activity">
    <reaction evidence="1">
        <text>D-fructose 6-phosphate + L-glutamine = D-glucosamine 6-phosphate + L-glutamate</text>
        <dbReference type="Rhea" id="RHEA:13237"/>
        <dbReference type="ChEBI" id="CHEBI:29985"/>
        <dbReference type="ChEBI" id="CHEBI:58359"/>
        <dbReference type="ChEBI" id="CHEBI:58725"/>
        <dbReference type="ChEBI" id="CHEBI:61527"/>
        <dbReference type="EC" id="2.6.1.16"/>
    </reaction>
</comment>
<comment type="subunit">
    <text evidence="1">Homodimer.</text>
</comment>
<comment type="subcellular location">
    <subcellularLocation>
        <location evidence="1">Cytoplasm</location>
    </subcellularLocation>
</comment>
<evidence type="ECO:0000255" key="1">
    <source>
        <dbReference type="HAMAP-Rule" id="MF_00164"/>
    </source>
</evidence>